<evidence type="ECO:0000250" key="1"/>
<evidence type="ECO:0000305" key="2"/>
<dbReference type="EMBL" id="BT045810">
    <property type="protein sequence ID" value="ACI34072.1"/>
    <property type="molecule type" value="mRNA"/>
</dbReference>
<dbReference type="RefSeq" id="NP_001133881.1">
    <property type="nucleotide sequence ID" value="NM_001140409.1"/>
</dbReference>
<dbReference type="SMR" id="B5X441"/>
<dbReference type="STRING" id="8030.ENSSSAP00000045511"/>
<dbReference type="PaxDb" id="8030-ENSSSAP00000045511"/>
<dbReference type="Ensembl" id="ENSSSAT00070003280">
    <property type="protein sequence ID" value="ENSSSAP00070002989"/>
    <property type="gene ID" value="ENSSSAG00070002298"/>
</dbReference>
<dbReference type="Ensembl" id="ENSSSAT00070021153">
    <property type="protein sequence ID" value="ENSSSAP00070020155"/>
    <property type="gene ID" value="ENSSSAG00070013320"/>
</dbReference>
<dbReference type="Ensembl" id="ENSSSAT00075077903">
    <property type="protein sequence ID" value="ENSSSAP00075055659"/>
    <property type="gene ID" value="ENSSSAG00075037248"/>
</dbReference>
<dbReference type="GeneID" id="100195380"/>
<dbReference type="KEGG" id="sasa:100195380"/>
<dbReference type="KEGG" id="sasa:106577353"/>
<dbReference type="CTD" id="100195380"/>
<dbReference type="OrthoDB" id="340030at7898"/>
<dbReference type="UniPathway" id="UPA00143"/>
<dbReference type="Proteomes" id="UP000087266">
    <property type="component" value="Chromosome ssa18"/>
</dbReference>
<dbReference type="Bgee" id="ENSSSAG00000047107">
    <property type="expression patterns" value="Expressed in ovary and 24 other cell types or tissues"/>
</dbReference>
<dbReference type="GO" id="GO:0005737">
    <property type="term" value="C:cytoplasm"/>
    <property type="evidence" value="ECO:0000250"/>
    <property type="project" value="UniProtKB"/>
</dbReference>
<dbReference type="GO" id="GO:0019005">
    <property type="term" value="C:SCF ubiquitin ligase complex"/>
    <property type="evidence" value="ECO:0000250"/>
    <property type="project" value="UniProtKB"/>
</dbReference>
<dbReference type="GO" id="GO:0030282">
    <property type="term" value="P:bone mineralization"/>
    <property type="evidence" value="ECO:0000250"/>
    <property type="project" value="UniProtKB"/>
</dbReference>
<dbReference type="GO" id="GO:0009953">
    <property type="term" value="P:dorsal/ventral pattern formation"/>
    <property type="evidence" value="ECO:0000250"/>
    <property type="project" value="UniProtKB"/>
</dbReference>
<dbReference type="GO" id="GO:0000086">
    <property type="term" value="P:G2/M transition of mitotic cell cycle"/>
    <property type="evidence" value="ECO:0000250"/>
    <property type="project" value="UniProtKB"/>
</dbReference>
<dbReference type="GO" id="GO:0030513">
    <property type="term" value="P:positive regulation of BMP signaling pathway"/>
    <property type="evidence" value="ECO:0000250"/>
    <property type="project" value="UniProtKB"/>
</dbReference>
<dbReference type="GO" id="GO:0016567">
    <property type="term" value="P:protein ubiquitination"/>
    <property type="evidence" value="ECO:0000250"/>
    <property type="project" value="UniProtKB"/>
</dbReference>
<dbReference type="GO" id="GO:0031146">
    <property type="term" value="P:SCF-dependent proteasomal ubiquitin-dependent protein catabolic process"/>
    <property type="evidence" value="ECO:0000250"/>
    <property type="project" value="UniProtKB"/>
</dbReference>
<dbReference type="CDD" id="cd22126">
    <property type="entry name" value="F-box_FBXL15"/>
    <property type="match status" value="1"/>
</dbReference>
<dbReference type="FunFam" id="3.80.10.10:FF:000113">
    <property type="entry name" value="F-box/LRR-repeat protein 15 isoform X1"/>
    <property type="match status" value="1"/>
</dbReference>
<dbReference type="Gene3D" id="3.80.10.10">
    <property type="entry name" value="Ribonuclease Inhibitor"/>
    <property type="match status" value="1"/>
</dbReference>
<dbReference type="InterPro" id="IPR036047">
    <property type="entry name" value="F-box-like_dom_sf"/>
</dbReference>
<dbReference type="InterPro" id="IPR001810">
    <property type="entry name" value="F-box_dom"/>
</dbReference>
<dbReference type="InterPro" id="IPR050648">
    <property type="entry name" value="F-box_LRR-repeat"/>
</dbReference>
<dbReference type="InterPro" id="IPR006553">
    <property type="entry name" value="Leu-rich_rpt_Cys-con_subtyp"/>
</dbReference>
<dbReference type="InterPro" id="IPR032675">
    <property type="entry name" value="LRR_dom_sf"/>
</dbReference>
<dbReference type="PANTHER" id="PTHR13382:SF79">
    <property type="entry name" value="F-BOX AND LEUCINE RICH REPEAT PROTEIN 15"/>
    <property type="match status" value="1"/>
</dbReference>
<dbReference type="PANTHER" id="PTHR13382">
    <property type="entry name" value="MITOCHONDRIAL ATP SYNTHASE COUPLING FACTOR B"/>
    <property type="match status" value="1"/>
</dbReference>
<dbReference type="Pfam" id="PF00646">
    <property type="entry name" value="F-box"/>
    <property type="match status" value="1"/>
</dbReference>
<dbReference type="SMART" id="SM00367">
    <property type="entry name" value="LRR_CC"/>
    <property type="match status" value="6"/>
</dbReference>
<dbReference type="SUPFAM" id="SSF81383">
    <property type="entry name" value="F-box domain"/>
    <property type="match status" value="1"/>
</dbReference>
<dbReference type="SUPFAM" id="SSF52047">
    <property type="entry name" value="RNI-like"/>
    <property type="match status" value="1"/>
</dbReference>
<keyword id="KW-0963">Cytoplasm</keyword>
<keyword id="KW-0433">Leucine-rich repeat</keyword>
<keyword id="KW-1185">Reference proteome</keyword>
<keyword id="KW-0677">Repeat</keyword>
<keyword id="KW-0833">Ubl conjugation pathway</keyword>
<gene>
    <name type="primary">fbxl15</name>
</gene>
<feature type="chain" id="PRO_0000410908" description="F-box/LRR-repeat protein 15">
    <location>
        <begin position="1"/>
        <end position="292"/>
    </location>
</feature>
<feature type="domain" description="F-box">
    <location>
        <begin position="12"/>
        <end position="59"/>
    </location>
</feature>
<feature type="repeat" description="LRR 1">
    <location>
        <begin position="134"/>
        <end position="155"/>
    </location>
</feature>
<feature type="repeat" description="LRR 2">
    <location>
        <begin position="160"/>
        <end position="181"/>
    </location>
</feature>
<feature type="repeat" description="LRR 3">
    <location>
        <begin position="186"/>
        <end position="207"/>
    </location>
</feature>
<feature type="repeat" description="LRR 4">
    <location>
        <begin position="212"/>
        <end position="233"/>
    </location>
</feature>
<feature type="repeat" description="LRR 5">
    <location>
        <begin position="238"/>
        <end position="259"/>
    </location>
</feature>
<proteinExistence type="evidence at transcript level"/>
<accession>B5X441</accession>
<comment type="function">
    <text evidence="1">Substrate recognition component of a SCF (SKP1-CUL1-F-box protein) E3 ubiquitin-protein ligase complex which mediates the ubiquitination and subsequent proteasomal degradation of target proteins. Acts as a positive regulator of the BMP signaling pathway. Required for dorsal/ventral pattern formation (By similarity).</text>
</comment>
<comment type="pathway">
    <text>Protein modification; protein ubiquitination.</text>
</comment>
<comment type="subunit">
    <text evidence="1">Part of the SCF (SKP1-CUL1-F-box) E3 ubiquitin-protein ligase complex SCF(FBXL15).</text>
</comment>
<comment type="subcellular location">
    <subcellularLocation>
        <location evidence="1">Cytoplasm</location>
    </subcellularLocation>
</comment>
<comment type="similarity">
    <text evidence="2">Belongs to the FBXL15 family.</text>
</comment>
<protein>
    <recommendedName>
        <fullName>F-box/LRR-repeat protein 15</fullName>
    </recommendedName>
</protein>
<organism>
    <name type="scientific">Salmo salar</name>
    <name type="common">Atlantic salmon</name>
    <dbReference type="NCBI Taxonomy" id="8030"/>
    <lineage>
        <taxon>Eukaryota</taxon>
        <taxon>Metazoa</taxon>
        <taxon>Chordata</taxon>
        <taxon>Craniata</taxon>
        <taxon>Vertebrata</taxon>
        <taxon>Euteleostomi</taxon>
        <taxon>Actinopterygii</taxon>
        <taxon>Neopterygii</taxon>
        <taxon>Teleostei</taxon>
        <taxon>Protacanthopterygii</taxon>
        <taxon>Salmoniformes</taxon>
        <taxon>Salmonidae</taxon>
        <taxon>Salmoninae</taxon>
        <taxon>Salmo</taxon>
    </lineage>
</organism>
<reference key="1">
    <citation type="journal article" date="2010" name="BMC Genomics">
        <title>Salmo salar and Esox lucius full-length cDNA sequences reveal changes in evolutionary pressures on a post-tetraploidization genome.</title>
        <authorList>
            <person name="Leong J.S."/>
            <person name="Jantzen S.G."/>
            <person name="von Schalburg K.R."/>
            <person name="Cooper G.A."/>
            <person name="Messmer A.M."/>
            <person name="Liao N.Y."/>
            <person name="Munro S."/>
            <person name="Moore R."/>
            <person name="Holt R.A."/>
            <person name="Jones S.J."/>
            <person name="Davidson W.S."/>
            <person name="Koop B.F."/>
        </authorList>
    </citation>
    <scope>NUCLEOTIDE SEQUENCE [LARGE SCALE MRNA]</scope>
</reference>
<name>FXL15_SALSA</name>
<sequence>MDAETECCKCHLLDLPWEDVLVTHIFCYLPLRQLVRLQRVSKQFYALIQVYLANCRTFDLTQIGPSLPKEAFCNILRDNKVLQNLSVQNCSDWVTDTELLPVIGQNQHLLRVDMRGCDRLTRHSLVAVSLSCTHLQYLGLAHCEWVDSLSIRSLADHCGGLRSIDLTACRQLKDEAICYLSKKCLKMRSLSVAVNANITDVSVEEVAKNCRELEQLDLTGCLRVRNDSIRTVAEYCPKLQSLKVNHCHNVTESSLDPLRKRNVEIDVEPPLQRALVLLQDVVGFAPFINLQI</sequence>